<keyword id="KW-0450">Lipoyl</keyword>
<gene>
    <name evidence="1" type="primary">gcvH</name>
    <name type="ordered locus">CbuG_0097</name>
</gene>
<sequence length="130" mass="14594">MAEFPAELYYSKNHEWMRKESDETFTVGITDHAQEQLGDLVFVELPETNIHVDAGDEVAVVESVKTAADVYSPLSGKVIEINNALENEPATVNRDPYGDGWLYRITIDDEKELNDLLDADGYQTLIEAES</sequence>
<comment type="function">
    <text evidence="1">The glycine cleavage system catalyzes the degradation of glycine. The H protein shuttles the methylamine group of glycine from the P protein to the T protein.</text>
</comment>
<comment type="cofactor">
    <cofactor evidence="1">
        <name>(R)-lipoate</name>
        <dbReference type="ChEBI" id="CHEBI:83088"/>
    </cofactor>
    <text evidence="1">Binds 1 lipoyl cofactor covalently.</text>
</comment>
<comment type="subunit">
    <text evidence="1">The glycine cleavage system is composed of four proteins: P, T, L and H.</text>
</comment>
<comment type="similarity">
    <text evidence="1">Belongs to the GcvH family.</text>
</comment>
<name>GCSH_COXB2</name>
<feature type="chain" id="PRO_1000114515" description="Glycine cleavage system H protein">
    <location>
        <begin position="1"/>
        <end position="130"/>
    </location>
</feature>
<feature type="domain" description="Lipoyl-binding" evidence="2">
    <location>
        <begin position="24"/>
        <end position="106"/>
    </location>
</feature>
<feature type="modified residue" description="N6-lipoyllysine" evidence="1">
    <location>
        <position position="65"/>
    </location>
</feature>
<organism>
    <name type="scientific">Coxiella burnetii (strain CbuG_Q212)</name>
    <name type="common">Coxiella burnetii (strain Q212)</name>
    <dbReference type="NCBI Taxonomy" id="434923"/>
    <lineage>
        <taxon>Bacteria</taxon>
        <taxon>Pseudomonadati</taxon>
        <taxon>Pseudomonadota</taxon>
        <taxon>Gammaproteobacteria</taxon>
        <taxon>Legionellales</taxon>
        <taxon>Coxiellaceae</taxon>
        <taxon>Coxiella</taxon>
    </lineage>
</organism>
<evidence type="ECO:0000255" key="1">
    <source>
        <dbReference type="HAMAP-Rule" id="MF_00272"/>
    </source>
</evidence>
<evidence type="ECO:0000255" key="2">
    <source>
        <dbReference type="PROSITE-ProRule" id="PRU01066"/>
    </source>
</evidence>
<reference key="1">
    <citation type="journal article" date="2009" name="Infect. Immun.">
        <title>Comparative genomics reveal extensive transposon-mediated genomic plasticity and diversity among potential effector proteins within the genus Coxiella.</title>
        <authorList>
            <person name="Beare P.A."/>
            <person name="Unsworth N."/>
            <person name="Andoh M."/>
            <person name="Voth D.E."/>
            <person name="Omsland A."/>
            <person name="Gilk S.D."/>
            <person name="Williams K.P."/>
            <person name="Sobral B.W."/>
            <person name="Kupko J.J. III"/>
            <person name="Porcella S.F."/>
            <person name="Samuel J.E."/>
            <person name="Heinzen R.A."/>
        </authorList>
    </citation>
    <scope>NUCLEOTIDE SEQUENCE [LARGE SCALE GENOMIC DNA]</scope>
    <source>
        <strain>CbuG_Q212</strain>
    </source>
</reference>
<protein>
    <recommendedName>
        <fullName evidence="1">Glycine cleavage system H protein</fullName>
    </recommendedName>
</protein>
<dbReference type="EMBL" id="CP001019">
    <property type="protein sequence ID" value="ACJ17552.1"/>
    <property type="molecule type" value="Genomic_DNA"/>
</dbReference>
<dbReference type="RefSeq" id="WP_005770508.1">
    <property type="nucleotide sequence ID" value="NC_011527.1"/>
</dbReference>
<dbReference type="SMR" id="B6J2H8"/>
<dbReference type="KEGG" id="cbg:CbuG_0097"/>
<dbReference type="HOGENOM" id="CLU_097408_2_1_6"/>
<dbReference type="GO" id="GO:0005829">
    <property type="term" value="C:cytosol"/>
    <property type="evidence" value="ECO:0007669"/>
    <property type="project" value="TreeGrafter"/>
</dbReference>
<dbReference type="GO" id="GO:0005960">
    <property type="term" value="C:glycine cleavage complex"/>
    <property type="evidence" value="ECO:0007669"/>
    <property type="project" value="InterPro"/>
</dbReference>
<dbReference type="GO" id="GO:0019464">
    <property type="term" value="P:glycine decarboxylation via glycine cleavage system"/>
    <property type="evidence" value="ECO:0007669"/>
    <property type="project" value="UniProtKB-UniRule"/>
</dbReference>
<dbReference type="CDD" id="cd06848">
    <property type="entry name" value="GCS_H"/>
    <property type="match status" value="1"/>
</dbReference>
<dbReference type="Gene3D" id="2.40.50.100">
    <property type="match status" value="1"/>
</dbReference>
<dbReference type="HAMAP" id="MF_00272">
    <property type="entry name" value="GcvH"/>
    <property type="match status" value="1"/>
</dbReference>
<dbReference type="InterPro" id="IPR003016">
    <property type="entry name" value="2-oxoA_DH_lipoyl-BS"/>
</dbReference>
<dbReference type="InterPro" id="IPR000089">
    <property type="entry name" value="Biotin_lipoyl"/>
</dbReference>
<dbReference type="InterPro" id="IPR002930">
    <property type="entry name" value="GCV_H"/>
</dbReference>
<dbReference type="InterPro" id="IPR033753">
    <property type="entry name" value="GCV_H/Fam206"/>
</dbReference>
<dbReference type="InterPro" id="IPR017453">
    <property type="entry name" value="GCV_H_sub"/>
</dbReference>
<dbReference type="InterPro" id="IPR011053">
    <property type="entry name" value="Single_hybrid_motif"/>
</dbReference>
<dbReference type="NCBIfam" id="TIGR00527">
    <property type="entry name" value="gcvH"/>
    <property type="match status" value="1"/>
</dbReference>
<dbReference type="NCBIfam" id="NF002270">
    <property type="entry name" value="PRK01202.1"/>
    <property type="match status" value="1"/>
</dbReference>
<dbReference type="PANTHER" id="PTHR11715">
    <property type="entry name" value="GLYCINE CLEAVAGE SYSTEM H PROTEIN"/>
    <property type="match status" value="1"/>
</dbReference>
<dbReference type="PANTHER" id="PTHR11715:SF3">
    <property type="entry name" value="GLYCINE CLEAVAGE SYSTEM H PROTEIN-RELATED"/>
    <property type="match status" value="1"/>
</dbReference>
<dbReference type="Pfam" id="PF01597">
    <property type="entry name" value="GCV_H"/>
    <property type="match status" value="1"/>
</dbReference>
<dbReference type="SUPFAM" id="SSF51230">
    <property type="entry name" value="Single hybrid motif"/>
    <property type="match status" value="1"/>
</dbReference>
<dbReference type="PROSITE" id="PS50968">
    <property type="entry name" value="BIOTINYL_LIPOYL"/>
    <property type="match status" value="1"/>
</dbReference>
<dbReference type="PROSITE" id="PS00189">
    <property type="entry name" value="LIPOYL"/>
    <property type="match status" value="1"/>
</dbReference>
<proteinExistence type="inferred from homology"/>
<accession>B6J2H8</accession>